<comment type="function">
    <text evidence="5 6 7 9">Catalyzes the hydrolysis of complex carboxylic polyesters found in the cell wall of plants (PubMed:15968570, PubMed:19810726, PubMed:7705606). Degrades cutin, a macromolecule that forms the structure of the plant cuticle (PubMed:15968570, PubMed:19810726). Recruited by the hydrophobin rolA that undergoes a conformational change after its adsorption to hydrophobic surfaces such as the biodegradable polyester polybutylene succinate-coadipate (PBSA), which results in condensation of cutL1 on the PBSA surface and consequent stimulation of PBSA hydrolysis (PubMed:16135240).</text>
</comment>
<comment type="catalytic activity">
    <reaction evidence="3 4 12 13">
        <text>cutin + H2O = cutin monomers.</text>
        <dbReference type="EC" id="3.1.1.74"/>
    </reaction>
</comment>
<comment type="activity regulation">
    <text evidence="5">Competitively inhibited by the carboxylic acids butyric acid, valeric acid and hexanoic acid (PubMed:15968570). Competitively inhibited by the dicarboxylic acid succinic acid (PubMed:15968570). Competitively inhibited by the alcohols propan-1-ol, butan-1-ol, hexan-1-ol, octan-1-ol, and butane-1,4-diol (PubMed:15968570).</text>
</comment>
<comment type="biophysicochemical properties">
    <kinetics>
        <KM evidence="7">4.96 uM for p-nitrophenyl acetate (at pH 7.5)</KM>
        <KM evidence="5">1100 uM for p-nitrophenyl propionate (at pH 8.0 and 37 degrees Celsius)</KM>
        <KM evidence="7">0.21 uM for p-nitrophenyl butyrate (at pH 7.5)</KM>
        <KM evidence="5">220 uM for p-nitrophenyl butyrate (at pH 8.0 and 37 degrees Celsius)</KM>
        <KM evidence="7">0.04 uM for p-nitrophenyl valerate (at pH 7.5)</KM>
        <KM evidence="5">44 uM for p-nitrophenyl valerate (at pH 8.0 and 37 degrees Celsius)</KM>
        <KM evidence="7">0.29 uM for p-nitrophenyl hexanoate (at pH 7.5)</KM>
        <text evidence="5">kcat is 11 sec(-1) with p-nitrophenyl propionate as substrate (at pH 8.0 and 37 degrees Celsius) (PubMed:15968570). kcat is 18 sec(-1) with p-nitrophenyl butyrate as substrate (at pH 8.0 and 37 degrees Celsius) (PubMed:15968570). kcat is 14 sec(-1) with p-nitrophenyl valerate as substrate (at pH 8.0 and 37 degrees Celsius) (PubMed:15968570).</text>
    </kinetics>
    <phDependence>
        <text evidence="5">Optimum pH is 9.0.</text>
    </phDependence>
    <temperatureDependence>
        <text evidence="5 7">Optimum temperature is 25-40 degrees Celsius (PubMed:19810726). Optimum temperature is 35-55 degrees Celsius (PubMed:15968570).</text>
    </temperatureDependence>
</comment>
<comment type="subunit">
    <text evidence="6 8">Interacts with hadrophobin rolA in a pH-dependent manner.</text>
</comment>
<comment type="subcellular location">
    <subcellularLocation>
        <location evidence="6">Secreted</location>
    </subcellularLocation>
</comment>
<comment type="induction">
    <text evidence="6">Expression is highly induced by the biodegradable polyester polybutylene succinate-coadipate (PBSA).</text>
</comment>
<comment type="biotechnology">
    <text evidence="5">This enzyme enables the fungus to utilize the biodegradable plastics poly(butylene succinate) (PBS) and poly(butylene succinate-co-butylene adipate) (PBSA) as sole carbon source and could therefore be used in plastic recycling.</text>
</comment>
<comment type="similarity">
    <text evidence="11">Belongs to the cutinase family.</text>
</comment>
<reference key="1">
    <citation type="journal article" date="1995" name="FEMS Microbiol. Lett.">
        <title>Genome structure and nucleotide sequence of a lipolytic enzyme gene of Aspergillus oryzae.</title>
        <authorList>
            <person name="Ohnishi K."/>
            <person name="Toida J."/>
            <person name="Nakazawa H."/>
            <person name="Sekiguchi J."/>
        </authorList>
    </citation>
    <scope>NUCLEOTIDE SEQUENCE [GENOMIC DNA]</scope>
    <scope>FUNCTION</scope>
    <source>
        <strain>NBRC 4202</strain>
    </source>
</reference>
<reference key="2">
    <citation type="journal article" date="2005" name="Nature">
        <title>Genome sequencing and analysis of Aspergillus oryzae.</title>
        <authorList>
            <person name="Machida M."/>
            <person name="Asai K."/>
            <person name="Sano M."/>
            <person name="Tanaka T."/>
            <person name="Kumagai T."/>
            <person name="Terai G."/>
            <person name="Kusumoto K."/>
            <person name="Arima T."/>
            <person name="Akita O."/>
            <person name="Kashiwagi Y."/>
            <person name="Abe K."/>
            <person name="Gomi K."/>
            <person name="Horiuchi H."/>
            <person name="Kitamoto K."/>
            <person name="Kobayashi T."/>
            <person name="Takeuchi M."/>
            <person name="Denning D.W."/>
            <person name="Galagan J.E."/>
            <person name="Nierman W.C."/>
            <person name="Yu J."/>
            <person name="Archer D.B."/>
            <person name="Bennett J.W."/>
            <person name="Bhatnagar D."/>
            <person name="Cleveland T.E."/>
            <person name="Fedorova N.D."/>
            <person name="Gotoh O."/>
            <person name="Horikawa H."/>
            <person name="Hosoyama A."/>
            <person name="Ichinomiya M."/>
            <person name="Igarashi R."/>
            <person name="Iwashita K."/>
            <person name="Juvvadi P.R."/>
            <person name="Kato M."/>
            <person name="Kato Y."/>
            <person name="Kin T."/>
            <person name="Kokubun A."/>
            <person name="Maeda H."/>
            <person name="Maeyama N."/>
            <person name="Maruyama J."/>
            <person name="Nagasaki H."/>
            <person name="Nakajima T."/>
            <person name="Oda K."/>
            <person name="Okada K."/>
            <person name="Paulsen I."/>
            <person name="Sakamoto K."/>
            <person name="Sawano T."/>
            <person name="Takahashi M."/>
            <person name="Takase K."/>
            <person name="Terabayashi Y."/>
            <person name="Wortman J.R."/>
            <person name="Yamada O."/>
            <person name="Yamagata Y."/>
            <person name="Anazawa H."/>
            <person name="Hata Y."/>
            <person name="Koide Y."/>
            <person name="Komori T."/>
            <person name="Koyama Y."/>
            <person name="Minetoki T."/>
            <person name="Suharnan S."/>
            <person name="Tanaka A."/>
            <person name="Isono K."/>
            <person name="Kuhara S."/>
            <person name="Ogasawara N."/>
            <person name="Kikuchi H."/>
        </authorList>
    </citation>
    <scope>NUCLEOTIDE SEQUENCE [LARGE SCALE GENOMIC DNA]</scope>
    <source>
        <strain>ATCC 42149 / RIB 40</strain>
    </source>
</reference>
<reference key="3">
    <citation type="journal article" date="2005" name="Appl. Microbiol. Biotechnol.">
        <title>Purification and characterization of a biodegradable plastic-degrading enzyme from Aspergillus oryzae.</title>
        <authorList>
            <person name="Maeda H."/>
            <person name="Yamagata Y."/>
            <person name="Abe K."/>
            <person name="Hasegawa F."/>
            <person name="Machida M."/>
            <person name="Ishioka R."/>
            <person name="Gomi K."/>
            <person name="Nakajima T."/>
        </authorList>
    </citation>
    <scope>PROTEIN SEQUENCE OF 104-113</scope>
    <scope>FUNCTION</scope>
    <scope>ACTIVITY REGULATION</scope>
    <scope>CATALYTIC ACTIVITY</scope>
    <scope>BIOTECHNOLOGY</scope>
</reference>
<reference key="4">
    <citation type="journal article" date="2005" name="Mol. Microbiol.">
        <title>The fungal hydrophobin RolA recruits polyesterase and laterally moves on hydrophobic surfaces.</title>
        <authorList>
            <person name="Takahashi T."/>
            <person name="Maeda H."/>
            <person name="Yoneda S."/>
            <person name="Ohtaki S."/>
            <person name="Yamagata Y."/>
            <person name="Hasegawa F."/>
            <person name="Gomi K."/>
            <person name="Nakajima T."/>
            <person name="Abe K."/>
        </authorList>
    </citation>
    <scope>FUNCTION</scope>
    <scope>INDUCTION</scope>
    <scope>SUBCELLULAR LOCATION</scope>
    <scope>INTERACTION WITH ROLA</scope>
</reference>
<reference key="5">
    <citation type="journal article" date="2015" name="Mol. Microbiol.">
        <title>Ionic interaction of positive amino acid residues of fungal hydrophobin RolA with acidic amino acid residues of cutinase CutL1.</title>
        <authorList>
            <person name="Takahashi T."/>
            <person name="Tanaka T."/>
            <person name="Tsushima Y."/>
            <person name="Muragaki K."/>
            <person name="Uehara K."/>
            <person name="Takeuchi S."/>
            <person name="Maeda H."/>
            <person name="Yamagata Y."/>
            <person name="Nakayama M."/>
            <person name="Yoshimi A."/>
            <person name="Abe K."/>
        </authorList>
    </citation>
    <scope>FUNCTION</scope>
    <scope>INTERACTION WITH ROLA</scope>
    <scope>MUTAGENESIS OF GLU-31; ASP-142 AND ASP-171</scope>
</reference>
<reference evidence="14" key="6">
    <citation type="journal article" date="2009" name="J. Am. Chem. Soc.">
        <title>Structural and functional studies of Aspergillus oryzae cutinase: enhanced thermostability and hydrolytic activity of synthetic ester and polyester degradation.</title>
        <authorList>
            <person name="Liu Z."/>
            <person name="Gosser Y."/>
            <person name="Baker P.J."/>
            <person name="Ravee Y."/>
            <person name="Lu Z."/>
            <person name="Alemu G."/>
            <person name="Li H."/>
            <person name="Butterfoss G.L."/>
            <person name="Kong X.P."/>
            <person name="Gross R."/>
            <person name="Montclare J.K."/>
        </authorList>
    </citation>
    <scope>X-RAY CRYSTALLOGRAPHY (1.75 ANGSTROMS) OF 17-213</scope>
    <scope>FUNCTION</scope>
    <scope>CATALYTIC ACTIVITY</scope>
    <scope>BIOPHYSICOCHEMICAL PROPERTIES</scope>
    <scope>ACTIVE SITE</scope>
</reference>
<reference evidence="15" key="7">
    <citation type="submission" date="2011-02" db="PDB data bank">
        <title>Structure of Aspergillus oryzae cutinase expressed in Pichia pastoris, crystallized in the presence of Paraoxon.</title>
        <authorList>
            <person name="Lu A."/>
            <person name="Gosser Y."/>
            <person name="Montclare J.K."/>
            <person name="Liu Z."/>
            <person name="Kong X."/>
        </authorList>
    </citation>
    <scope>X-RAY CRYSTALLOGRAPHY (1.57 ANGSTROMS) OF 26-212</scope>
</reference>
<sequence length="213" mass="22263">MHLRNIVIALAATAVASPVDLQDRQLTGGDELRDGPCKPITFIFARASTEPGLLGISTGPAVCNRLKLARSGDVACQGVGPRYTADLPSNALPEGTSQAAIAEAQGLFEQAVSKCPDTQIVAGGYSQGTAVMNGAIKRLSADVQDKIKGVVLFGYTRNAQERGQIANFPKDKVKVYCAVGDLVCLGTLIVAPPHFSYLSDTGDASDFLLSQLG</sequence>
<feature type="signal peptide" evidence="2">
    <location>
        <begin position="1"/>
        <end position="16"/>
    </location>
</feature>
<feature type="chain" id="PRO_0000006434" description="Cutinase 1">
    <location>
        <begin position="17"/>
        <end position="213"/>
    </location>
</feature>
<feature type="active site" description="Nucleophile" evidence="7 14">
    <location>
        <position position="126"/>
    </location>
</feature>
<feature type="active site" evidence="7 14">
    <location>
        <position position="181"/>
    </location>
</feature>
<feature type="active site" description="Proton donor/acceptor" evidence="7 14">
    <location>
        <position position="194"/>
    </location>
</feature>
<feature type="site" description="Transition state stabilizer" evidence="1">
    <location>
        <position position="48"/>
    </location>
</feature>
<feature type="site" description="Transition state stabilizer" evidence="1">
    <location>
        <position position="127"/>
    </location>
</feature>
<feature type="disulfide bond" evidence="7 14 15">
    <location>
        <begin position="37"/>
        <end position="115"/>
    </location>
</feature>
<feature type="disulfide bond" evidence="7 14 15">
    <location>
        <begin position="63"/>
        <end position="76"/>
    </location>
</feature>
<feature type="disulfide bond" evidence="7 14 15">
    <location>
        <begin position="177"/>
        <end position="184"/>
    </location>
</feature>
<feature type="mutagenesis site" description="Reduces the affinity for hydrophobin rolA." evidence="8">
    <original>E</original>
    <variation>S</variation>
    <location>
        <position position="31"/>
    </location>
</feature>
<feature type="mutagenesis site" description="Reduces the affinity for hydrophobin rolA." evidence="8">
    <original>D</original>
    <variation>S</variation>
    <location>
        <position position="142"/>
    </location>
</feature>
<feature type="mutagenesis site" description="Reduces the affinity for hydrophobin rolA." evidence="8">
    <original>D</original>
    <variation>S</variation>
    <location>
        <position position="171"/>
    </location>
</feature>
<feature type="strand" evidence="17">
    <location>
        <begin position="28"/>
        <end position="30"/>
    </location>
</feature>
<feature type="helix" evidence="17">
    <location>
        <begin position="31"/>
        <end position="34"/>
    </location>
</feature>
<feature type="strand" evidence="17">
    <location>
        <begin position="39"/>
        <end position="45"/>
    </location>
</feature>
<feature type="turn" evidence="17">
    <location>
        <begin position="52"/>
        <end position="54"/>
    </location>
</feature>
<feature type="helix" evidence="17">
    <location>
        <begin position="58"/>
        <end position="69"/>
    </location>
</feature>
<feature type="turn" evidence="16">
    <location>
        <begin position="70"/>
        <end position="72"/>
    </location>
</feature>
<feature type="strand" evidence="17">
    <location>
        <begin position="74"/>
        <end position="78"/>
    </location>
</feature>
<feature type="helix" evidence="17">
    <location>
        <begin position="87"/>
        <end position="91"/>
    </location>
</feature>
<feature type="helix" evidence="17">
    <location>
        <begin position="98"/>
        <end position="114"/>
    </location>
</feature>
<feature type="strand" evidence="17">
    <location>
        <begin position="119"/>
        <end position="125"/>
    </location>
</feature>
<feature type="helix" evidence="17">
    <location>
        <begin position="127"/>
        <end position="136"/>
    </location>
</feature>
<feature type="helix" evidence="17">
    <location>
        <begin position="141"/>
        <end position="146"/>
    </location>
</feature>
<feature type="strand" evidence="17">
    <location>
        <begin position="147"/>
        <end position="154"/>
    </location>
</feature>
<feature type="turn" evidence="17">
    <location>
        <begin position="156"/>
        <end position="163"/>
    </location>
</feature>
<feature type="helix" evidence="17">
    <location>
        <begin position="170"/>
        <end position="172"/>
    </location>
</feature>
<feature type="strand" evidence="17">
    <location>
        <begin position="173"/>
        <end position="176"/>
    </location>
</feature>
<feature type="helix" evidence="17">
    <location>
        <begin position="182"/>
        <end position="185"/>
    </location>
</feature>
<feature type="helix" evidence="17">
    <location>
        <begin position="192"/>
        <end position="195"/>
    </location>
</feature>
<feature type="helix" evidence="17">
    <location>
        <begin position="197"/>
        <end position="200"/>
    </location>
</feature>
<feature type="helix" evidence="17">
    <location>
        <begin position="201"/>
        <end position="211"/>
    </location>
</feature>
<evidence type="ECO:0000250" key="1">
    <source>
        <dbReference type="UniProtKB" id="P00590"/>
    </source>
</evidence>
<evidence type="ECO:0000255" key="2"/>
<evidence type="ECO:0000255" key="3">
    <source>
        <dbReference type="PROSITE-ProRule" id="PRU10108"/>
    </source>
</evidence>
<evidence type="ECO:0000255" key="4">
    <source>
        <dbReference type="PROSITE-ProRule" id="PRU10109"/>
    </source>
</evidence>
<evidence type="ECO:0000269" key="5">
    <source>
    </source>
</evidence>
<evidence type="ECO:0000269" key="6">
    <source>
    </source>
</evidence>
<evidence type="ECO:0000269" key="7">
    <source>
    </source>
</evidence>
<evidence type="ECO:0000269" key="8">
    <source>
    </source>
</evidence>
<evidence type="ECO:0000269" key="9">
    <source>
    </source>
</evidence>
<evidence type="ECO:0000303" key="10">
    <source>
    </source>
</evidence>
<evidence type="ECO:0000305" key="11"/>
<evidence type="ECO:0000305" key="12">
    <source>
    </source>
</evidence>
<evidence type="ECO:0000305" key="13">
    <source>
    </source>
</evidence>
<evidence type="ECO:0007744" key="14">
    <source>
        <dbReference type="PDB" id="3GBS"/>
    </source>
</evidence>
<evidence type="ECO:0007744" key="15">
    <source>
        <dbReference type="PDB" id="3QPD"/>
    </source>
</evidence>
<evidence type="ECO:0007829" key="16">
    <source>
        <dbReference type="PDB" id="3GBS"/>
    </source>
</evidence>
<evidence type="ECO:0007829" key="17">
    <source>
        <dbReference type="PDB" id="3QPD"/>
    </source>
</evidence>
<organism>
    <name type="scientific">Aspergillus oryzae (strain ATCC 42149 / RIB 40)</name>
    <name type="common">Yellow koji mold</name>
    <dbReference type="NCBI Taxonomy" id="510516"/>
    <lineage>
        <taxon>Eukaryota</taxon>
        <taxon>Fungi</taxon>
        <taxon>Dikarya</taxon>
        <taxon>Ascomycota</taxon>
        <taxon>Pezizomycotina</taxon>
        <taxon>Eurotiomycetes</taxon>
        <taxon>Eurotiomycetidae</taxon>
        <taxon>Eurotiales</taxon>
        <taxon>Aspergillaceae</taxon>
        <taxon>Aspergillus</taxon>
        <taxon>Aspergillus subgen. Circumdati</taxon>
    </lineage>
</organism>
<name>CUTI1_ASPOR</name>
<dbReference type="EC" id="3.1.1.74" evidence="3 4 12 13"/>
<dbReference type="EMBL" id="D38311">
    <property type="protein sequence ID" value="BAA07428.1"/>
    <property type="molecule type" value="Genomic_DNA"/>
</dbReference>
<dbReference type="EMBL" id="BA000049">
    <property type="protein sequence ID" value="BAE55151.1"/>
    <property type="molecule type" value="Genomic_DNA"/>
</dbReference>
<dbReference type="RefSeq" id="XP_001817153.1">
    <property type="nucleotide sequence ID" value="XM_001817101.2"/>
</dbReference>
<dbReference type="PDB" id="3GBS">
    <property type="method" value="X-ray"/>
    <property type="resolution" value="1.75 A"/>
    <property type="chains" value="A=17-213"/>
</dbReference>
<dbReference type="PDB" id="3QPD">
    <property type="method" value="X-ray"/>
    <property type="resolution" value="1.57 A"/>
    <property type="chains" value="A=26-212"/>
</dbReference>
<dbReference type="PDBsum" id="3GBS"/>
<dbReference type="PDBsum" id="3QPD"/>
<dbReference type="SMR" id="P52956"/>
<dbReference type="STRING" id="510516.P52956"/>
<dbReference type="ESTHER" id="aspor-cutas">
    <property type="family name" value="Cutinase"/>
</dbReference>
<dbReference type="EnsemblFungi" id="BAE55151">
    <property type="protein sequence ID" value="BAE55151"/>
    <property type="gene ID" value="AO090005000029"/>
</dbReference>
<dbReference type="GeneID" id="5989098"/>
<dbReference type="KEGG" id="aor:AO090005000029"/>
<dbReference type="VEuPathDB" id="FungiDB:AO090005000029"/>
<dbReference type="HOGENOM" id="CLU_040058_2_0_1"/>
<dbReference type="OMA" id="KIFCLPT"/>
<dbReference type="OrthoDB" id="119092at5052"/>
<dbReference type="BRENDA" id="3.1.1.74">
    <property type="organism ID" value="522"/>
</dbReference>
<dbReference type="EvolutionaryTrace" id="P52956"/>
<dbReference type="Proteomes" id="UP000006564">
    <property type="component" value="Chromosome 1"/>
</dbReference>
<dbReference type="GO" id="GO:0005576">
    <property type="term" value="C:extracellular region"/>
    <property type="evidence" value="ECO:0000304"/>
    <property type="project" value="AspGD"/>
</dbReference>
<dbReference type="GO" id="GO:0050525">
    <property type="term" value="F:cutinase activity"/>
    <property type="evidence" value="ECO:0000314"/>
    <property type="project" value="UniProtKB"/>
</dbReference>
<dbReference type="GO" id="GO:0016052">
    <property type="term" value="P:carbohydrate catabolic process"/>
    <property type="evidence" value="ECO:0007669"/>
    <property type="project" value="TreeGrafter"/>
</dbReference>
<dbReference type="GO" id="GO:0016042">
    <property type="term" value="P:lipid catabolic process"/>
    <property type="evidence" value="ECO:0000304"/>
    <property type="project" value="AspGD"/>
</dbReference>
<dbReference type="FunFam" id="3.40.50.1820:FF:000235">
    <property type="entry name" value="Cutinase 1"/>
    <property type="match status" value="1"/>
</dbReference>
<dbReference type="Gene3D" id="3.40.50.1820">
    <property type="entry name" value="alpha/beta hydrolase"/>
    <property type="match status" value="1"/>
</dbReference>
<dbReference type="InterPro" id="IPR029058">
    <property type="entry name" value="AB_hydrolase_fold"/>
</dbReference>
<dbReference type="InterPro" id="IPR000675">
    <property type="entry name" value="Cutinase/axe"/>
</dbReference>
<dbReference type="InterPro" id="IPR043580">
    <property type="entry name" value="CUTINASE_1"/>
</dbReference>
<dbReference type="InterPro" id="IPR043579">
    <property type="entry name" value="CUTINASE_2"/>
</dbReference>
<dbReference type="InterPro" id="IPR011150">
    <property type="entry name" value="Cutinase_monf"/>
</dbReference>
<dbReference type="PANTHER" id="PTHR48250:SF3">
    <property type="entry name" value="CUTINASE 1-RELATED"/>
    <property type="match status" value="1"/>
</dbReference>
<dbReference type="PANTHER" id="PTHR48250">
    <property type="entry name" value="CUTINASE 2-RELATED"/>
    <property type="match status" value="1"/>
</dbReference>
<dbReference type="Pfam" id="PF01083">
    <property type="entry name" value="Cutinase"/>
    <property type="match status" value="1"/>
</dbReference>
<dbReference type="PRINTS" id="PR00129">
    <property type="entry name" value="CUTINASE"/>
</dbReference>
<dbReference type="SMART" id="SM01110">
    <property type="entry name" value="Cutinase"/>
    <property type="match status" value="1"/>
</dbReference>
<dbReference type="SUPFAM" id="SSF53474">
    <property type="entry name" value="alpha/beta-Hydrolases"/>
    <property type="match status" value="1"/>
</dbReference>
<dbReference type="PROSITE" id="PS00155">
    <property type="entry name" value="CUTINASE_1"/>
    <property type="match status" value="1"/>
</dbReference>
<dbReference type="PROSITE" id="PS00931">
    <property type="entry name" value="CUTINASE_2"/>
    <property type="match status" value="1"/>
</dbReference>
<protein>
    <recommendedName>
        <fullName evidence="10">Cutinase 1</fullName>
        <ecNumber evidence="3 4 12 13">3.1.1.74</ecNumber>
    </recommendedName>
    <alternativeName>
        <fullName evidence="10">Cutin hydrolase 1</fullName>
        <shortName evidence="10">L1</shortName>
    </alternativeName>
</protein>
<gene>
    <name evidence="10" type="primary">cutL1</name>
    <name type="synonym">CutL</name>
    <name type="ORF">AO090005000029</name>
</gene>
<keyword id="KW-0002">3D-structure</keyword>
<keyword id="KW-0903">Direct protein sequencing</keyword>
<keyword id="KW-1015">Disulfide bond</keyword>
<keyword id="KW-0378">Hydrolase</keyword>
<keyword id="KW-1185">Reference proteome</keyword>
<keyword id="KW-0964">Secreted</keyword>
<keyword id="KW-0719">Serine esterase</keyword>
<keyword id="KW-0732">Signal</keyword>
<accession>P52956</accession>
<accession>Q2UTG4</accession>
<proteinExistence type="evidence at protein level"/>